<protein>
    <recommendedName>
        <fullName>SPbeta prophage-derived pesticidal crystal protein-like YokG</fullName>
    </recommendedName>
</protein>
<evidence type="ECO:0000305" key="1"/>
<keyword id="KW-1185">Reference proteome</keyword>
<gene>
    <name type="primary">yokG</name>
    <name type="ordered locus">BSU21600</name>
</gene>
<dbReference type="EMBL" id="AL009126">
    <property type="protein sequence ID" value="CAB14078.1"/>
    <property type="molecule type" value="Genomic_DNA"/>
</dbReference>
<dbReference type="RefSeq" id="NP_390043.1">
    <property type="nucleotide sequence ID" value="NC_000964.3"/>
</dbReference>
<dbReference type="RefSeq" id="WP_004399120.1">
    <property type="nucleotide sequence ID" value="NZ_OZ025638.1"/>
</dbReference>
<dbReference type="SMR" id="O32000"/>
<dbReference type="FunCoup" id="O32000">
    <property type="interactions" value="25"/>
</dbReference>
<dbReference type="IntAct" id="O32000">
    <property type="interactions" value="1"/>
</dbReference>
<dbReference type="MINT" id="O32000"/>
<dbReference type="STRING" id="224308.BSU21600"/>
<dbReference type="jPOST" id="O32000"/>
<dbReference type="PaxDb" id="224308-BSU21600"/>
<dbReference type="EnsemblBacteria" id="CAB14078">
    <property type="protein sequence ID" value="CAB14078"/>
    <property type="gene ID" value="BSU_21600"/>
</dbReference>
<dbReference type="GeneID" id="939112"/>
<dbReference type="KEGG" id="bsu:BSU21600"/>
<dbReference type="PATRIC" id="fig|224308.179.peg.2359"/>
<dbReference type="eggNOG" id="ENOG5031BH4">
    <property type="taxonomic scope" value="Bacteria"/>
</dbReference>
<dbReference type="InParanoid" id="O32000"/>
<dbReference type="OrthoDB" id="2894537at2"/>
<dbReference type="BioCyc" id="BSUB:BSU21600-MONOMER"/>
<dbReference type="Proteomes" id="UP000001570">
    <property type="component" value="Chromosome"/>
</dbReference>
<dbReference type="CDD" id="cd22656">
    <property type="entry name" value="ClyA_Cry6Aa-like"/>
    <property type="match status" value="1"/>
</dbReference>
<dbReference type="Gene3D" id="1.20.1170.10">
    <property type="match status" value="1"/>
</dbReference>
<dbReference type="SUPFAM" id="SSF58100">
    <property type="entry name" value="Bacterial hemolysins"/>
    <property type="match status" value="1"/>
</dbReference>
<sequence>MKYDNLLDATSQYGPQDLLLGRDGLISTGYWAKTQANILTGTGLPVSNDEMKTYLNLPKNVEIPQDFQKLYDVYNEYKKLCDWWLEKLLSCVNKMANDIYNVGSTTSELINEALQPGLRAITTASNDQDRQDAIQDFHEVCLILMRELDENQQSMKDVQNLLNSFLQGGNNFIGVTQLNNSFEEVMTYLDSQYNDESEIHDLLNIFMQFKKLLGESLEEHEINEKVKFSSELGPLIGYIVSEMLEYSDVQMFKQRIDNFQNLNGVDAQVALVVKVLSLFHGINIDLHNVIYQAERSLEFIEQTEGNWHSIANQFYSLAQGFENEDINKLSTDLDNAAATWEAVANKAKEFVTNSYQG</sequence>
<reference key="1">
    <citation type="journal article" date="1997" name="Nature">
        <title>The complete genome sequence of the Gram-positive bacterium Bacillus subtilis.</title>
        <authorList>
            <person name="Kunst F."/>
            <person name="Ogasawara N."/>
            <person name="Moszer I."/>
            <person name="Albertini A.M."/>
            <person name="Alloni G."/>
            <person name="Azevedo V."/>
            <person name="Bertero M.G."/>
            <person name="Bessieres P."/>
            <person name="Bolotin A."/>
            <person name="Borchert S."/>
            <person name="Borriss R."/>
            <person name="Boursier L."/>
            <person name="Brans A."/>
            <person name="Braun M."/>
            <person name="Brignell S.C."/>
            <person name="Bron S."/>
            <person name="Brouillet S."/>
            <person name="Bruschi C.V."/>
            <person name="Caldwell B."/>
            <person name="Capuano V."/>
            <person name="Carter N.M."/>
            <person name="Choi S.-K."/>
            <person name="Codani J.-J."/>
            <person name="Connerton I.F."/>
            <person name="Cummings N.J."/>
            <person name="Daniel R.A."/>
            <person name="Denizot F."/>
            <person name="Devine K.M."/>
            <person name="Duesterhoeft A."/>
            <person name="Ehrlich S.D."/>
            <person name="Emmerson P.T."/>
            <person name="Entian K.-D."/>
            <person name="Errington J."/>
            <person name="Fabret C."/>
            <person name="Ferrari E."/>
            <person name="Foulger D."/>
            <person name="Fritz C."/>
            <person name="Fujita M."/>
            <person name="Fujita Y."/>
            <person name="Fuma S."/>
            <person name="Galizzi A."/>
            <person name="Galleron N."/>
            <person name="Ghim S.-Y."/>
            <person name="Glaser P."/>
            <person name="Goffeau A."/>
            <person name="Golightly E.J."/>
            <person name="Grandi G."/>
            <person name="Guiseppi G."/>
            <person name="Guy B.J."/>
            <person name="Haga K."/>
            <person name="Haiech J."/>
            <person name="Harwood C.R."/>
            <person name="Henaut A."/>
            <person name="Hilbert H."/>
            <person name="Holsappel S."/>
            <person name="Hosono S."/>
            <person name="Hullo M.-F."/>
            <person name="Itaya M."/>
            <person name="Jones L.-M."/>
            <person name="Joris B."/>
            <person name="Karamata D."/>
            <person name="Kasahara Y."/>
            <person name="Klaerr-Blanchard M."/>
            <person name="Klein C."/>
            <person name="Kobayashi Y."/>
            <person name="Koetter P."/>
            <person name="Koningstein G."/>
            <person name="Krogh S."/>
            <person name="Kumano M."/>
            <person name="Kurita K."/>
            <person name="Lapidus A."/>
            <person name="Lardinois S."/>
            <person name="Lauber J."/>
            <person name="Lazarevic V."/>
            <person name="Lee S.-M."/>
            <person name="Levine A."/>
            <person name="Liu H."/>
            <person name="Masuda S."/>
            <person name="Mauel C."/>
            <person name="Medigue C."/>
            <person name="Medina N."/>
            <person name="Mellado R.P."/>
            <person name="Mizuno M."/>
            <person name="Moestl D."/>
            <person name="Nakai S."/>
            <person name="Noback M."/>
            <person name="Noone D."/>
            <person name="O'Reilly M."/>
            <person name="Ogawa K."/>
            <person name="Ogiwara A."/>
            <person name="Oudega B."/>
            <person name="Park S.-H."/>
            <person name="Parro V."/>
            <person name="Pohl T.M."/>
            <person name="Portetelle D."/>
            <person name="Porwollik S."/>
            <person name="Prescott A.M."/>
            <person name="Presecan E."/>
            <person name="Pujic P."/>
            <person name="Purnelle B."/>
            <person name="Rapoport G."/>
            <person name="Rey M."/>
            <person name="Reynolds S."/>
            <person name="Rieger M."/>
            <person name="Rivolta C."/>
            <person name="Rocha E."/>
            <person name="Roche B."/>
            <person name="Rose M."/>
            <person name="Sadaie Y."/>
            <person name="Sato T."/>
            <person name="Scanlan E."/>
            <person name="Schleich S."/>
            <person name="Schroeter R."/>
            <person name="Scoffone F."/>
            <person name="Sekiguchi J."/>
            <person name="Sekowska A."/>
            <person name="Seror S.J."/>
            <person name="Serror P."/>
            <person name="Shin B.-S."/>
            <person name="Soldo B."/>
            <person name="Sorokin A."/>
            <person name="Tacconi E."/>
            <person name="Takagi T."/>
            <person name="Takahashi H."/>
            <person name="Takemaru K."/>
            <person name="Takeuchi M."/>
            <person name="Tamakoshi A."/>
            <person name="Tanaka T."/>
            <person name="Terpstra P."/>
            <person name="Tognoni A."/>
            <person name="Tosato V."/>
            <person name="Uchiyama S."/>
            <person name="Vandenbol M."/>
            <person name="Vannier F."/>
            <person name="Vassarotti A."/>
            <person name="Viari A."/>
            <person name="Wambutt R."/>
            <person name="Wedler E."/>
            <person name="Wedler H."/>
            <person name="Weitzenegger T."/>
            <person name="Winters P."/>
            <person name="Wipat A."/>
            <person name="Yamamoto H."/>
            <person name="Yamane K."/>
            <person name="Yasumoto K."/>
            <person name="Yata K."/>
            <person name="Yoshida K."/>
            <person name="Yoshikawa H.-F."/>
            <person name="Zumstein E."/>
            <person name="Yoshikawa H."/>
            <person name="Danchin A."/>
        </authorList>
    </citation>
    <scope>NUCLEOTIDE SEQUENCE [LARGE SCALE GENOMIC DNA]</scope>
    <source>
        <strain>168</strain>
    </source>
</reference>
<name>YOKG_BACSU</name>
<organism>
    <name type="scientific">Bacillus subtilis (strain 168)</name>
    <dbReference type="NCBI Taxonomy" id="224308"/>
    <lineage>
        <taxon>Bacteria</taxon>
        <taxon>Bacillati</taxon>
        <taxon>Bacillota</taxon>
        <taxon>Bacilli</taxon>
        <taxon>Bacillales</taxon>
        <taxon>Bacillaceae</taxon>
        <taxon>Bacillus</taxon>
    </lineage>
</organism>
<comment type="similarity">
    <text evidence="1">Belongs to the cry6A endotoxin family.</text>
</comment>
<proteinExistence type="inferred from homology"/>
<feature type="chain" id="PRO_0000360802" description="SPbeta prophage-derived pesticidal crystal protein-like YokG">
    <location>
        <begin position="1"/>
        <end position="357"/>
    </location>
</feature>
<accession>O32000</accession>